<proteinExistence type="predicted"/>
<feature type="chain" id="PRO_0000164981" description="Putative endonuclease segB">
    <location>
        <begin position="1"/>
        <end position="221"/>
    </location>
</feature>
<feature type="domain" description="GIY-YIG" evidence="2">
    <location>
        <begin position="1"/>
        <end position="84"/>
    </location>
</feature>
<feature type="sequence conflict" description="In Ref. 2; CAA93270." evidence="3" ref="2">
    <original>G</original>
    <variation>E</variation>
    <location>
        <position position="111"/>
    </location>
</feature>
<sequence>MFYYTYKITNKINNKIYIGVHSTENLDDGYMGSGKLLKRAQDKYGIENFSKEILEYFDDKESMLEAEKNIVTEEFLNRPDVYNLKLGGEGGWDHVNIPGMLNQKKDASLKGAKSFKSRFENDILLQEKYRKIGSNVFKRLWSTPEYREKFLNNSRFLNKHHTPETINKMKESHAKNNHQKGEKNSQFGMMWIHSLDEKVSKRIKKTDPIPEGWFKGRKMKF</sequence>
<keyword id="KW-0255">Endonuclease</keyword>
<keyword id="KW-0378">Hydrolase</keyword>
<keyword id="KW-0460">Magnesium</keyword>
<keyword id="KW-0540">Nuclease</keyword>
<keyword id="KW-1185">Reference proteome</keyword>
<comment type="function">
    <text>Probably involved in the movement of the endonuclease-encoding DNA.</text>
</comment>
<comment type="cofactor">
    <cofactor evidence="1">
        <name>Mg(2+)</name>
        <dbReference type="ChEBI" id="CHEBI:18420"/>
    </cofactor>
</comment>
<comment type="similarity">
    <text evidence="3">To endonucleases of group I introns of fungi and phage.</text>
</comment>
<dbReference type="EC" id="3.1.-.-"/>
<dbReference type="EMBL" id="X03016">
    <property type="protein sequence ID" value="CAA26807.1"/>
    <property type="status" value="ALT_SEQ"/>
    <property type="molecule type" value="Genomic_DNA"/>
</dbReference>
<dbReference type="EMBL" id="Z69338">
    <property type="protein sequence ID" value="CAA93270.1"/>
    <property type="molecule type" value="Genomic_DNA"/>
</dbReference>
<dbReference type="EMBL" id="AF158101">
    <property type="protein sequence ID" value="AAD42655.2"/>
    <property type="molecule type" value="Genomic_DNA"/>
</dbReference>
<dbReference type="RefSeq" id="NP_049745.2">
    <property type="nucleotide sequence ID" value="NC_000866.4"/>
</dbReference>
<dbReference type="SMR" id="P13325"/>
<dbReference type="GeneID" id="1258659"/>
<dbReference type="KEGG" id="vg:1258659"/>
<dbReference type="OrthoDB" id="18370at10239"/>
<dbReference type="Proteomes" id="UP000009087">
    <property type="component" value="Segment"/>
</dbReference>
<dbReference type="GO" id="GO:0004520">
    <property type="term" value="F:DNA endonuclease activity"/>
    <property type="evidence" value="ECO:0000314"/>
    <property type="project" value="CACAO"/>
</dbReference>
<dbReference type="CDD" id="cd10444">
    <property type="entry name" value="GIY-YIG_SegABCDEFG"/>
    <property type="match status" value="1"/>
</dbReference>
<dbReference type="Gene3D" id="3.40.1440.10">
    <property type="entry name" value="GIY-YIG endonuclease"/>
    <property type="match status" value="1"/>
</dbReference>
<dbReference type="InterPro" id="IPR000305">
    <property type="entry name" value="GIY-YIG_endonuc"/>
</dbReference>
<dbReference type="InterPro" id="IPR035901">
    <property type="entry name" value="GIY-YIG_endonuc_sf"/>
</dbReference>
<dbReference type="Pfam" id="PF01541">
    <property type="entry name" value="GIY-YIG"/>
    <property type="match status" value="1"/>
</dbReference>
<dbReference type="SMART" id="SM00465">
    <property type="entry name" value="GIYc"/>
    <property type="match status" value="1"/>
</dbReference>
<dbReference type="SUPFAM" id="SSF82771">
    <property type="entry name" value="GIY-YIG endonuclease"/>
    <property type="match status" value="1"/>
</dbReference>
<dbReference type="PROSITE" id="PS50164">
    <property type="entry name" value="GIY_YIG"/>
    <property type="match status" value="1"/>
</dbReference>
<protein>
    <recommendedName>
        <fullName>Putative endonuclease segB</fullName>
        <ecNumber>3.1.-.-</ecNumber>
    </recommendedName>
    <alternativeName>
        <fullName>Endodeoxyribonuclease segB</fullName>
    </alternativeName>
</protein>
<gene>
    <name type="primary">segB</name>
    <name type="synonym">trnA.1</name>
</gene>
<accession>P13325</accession>
<accession>Q38046</accession>
<accession>Q9T0V2</accession>
<name>SEGB_BPT4</name>
<reference key="1">
    <citation type="journal article" date="1985" name="J. Mol. Biol.">
        <title>Sequence organization and control of transcription in the bacteriophage T4 tRNA region.</title>
        <authorList>
            <person name="Broida J."/>
            <person name="Abelson J."/>
        </authorList>
    </citation>
    <scope>PRELIMINARY NUCLEOTIDE SEQUENCE</scope>
</reference>
<reference key="2">
    <citation type="submission" date="1996-02" db="EMBL/GenBank/DDBJ databases">
        <authorList>
            <person name="Kadyrov F.A."/>
            <person name="Kryukov V.M."/>
        </authorList>
    </citation>
    <scope>NUCLEOTIDE SEQUENCE [GENOMIC DNA]</scope>
</reference>
<reference key="3">
    <citation type="journal article" date="2003" name="Microbiol. Mol. Biol. Rev.">
        <title>Bacteriophage T4 genome.</title>
        <authorList>
            <person name="Miller E.S."/>
            <person name="Kutter E."/>
            <person name="Mosig G."/>
            <person name="Arisaka F."/>
            <person name="Kunisawa T."/>
            <person name="Ruger W."/>
        </authorList>
    </citation>
    <scope>NUCLEOTIDE SEQUENCE [LARGE SCALE GENOMIC DNA]</scope>
</reference>
<reference key="4">
    <citation type="journal article" date="1992" name="Proc. Natl. Acad. Sci. U.S.A.">
        <title>Identification of a family of bacteriophage T4 genes encoding proteins similar to those present in group I introns of fungi and phage.</title>
        <authorList>
            <person name="Sharma M."/>
            <person name="Ellis R.L."/>
            <person name="Hinton D.M."/>
        </authorList>
    </citation>
    <scope>IDENTIFICATION</scope>
    <scope>POSSIBLE FUNCTION</scope>
</reference>
<organism>
    <name type="scientific">Enterobacteria phage T4</name>
    <name type="common">Bacteriophage T4</name>
    <dbReference type="NCBI Taxonomy" id="10665"/>
    <lineage>
        <taxon>Viruses</taxon>
        <taxon>Duplodnaviria</taxon>
        <taxon>Heunggongvirae</taxon>
        <taxon>Uroviricota</taxon>
        <taxon>Caudoviricetes</taxon>
        <taxon>Straboviridae</taxon>
        <taxon>Tevenvirinae</taxon>
        <taxon>Tequatrovirus</taxon>
    </lineage>
</organism>
<organismHost>
    <name type="scientific">Escherichia coli</name>
    <dbReference type="NCBI Taxonomy" id="562"/>
</organismHost>
<evidence type="ECO:0000250" key="1"/>
<evidence type="ECO:0000255" key="2">
    <source>
        <dbReference type="PROSITE-ProRule" id="PRU00977"/>
    </source>
</evidence>
<evidence type="ECO:0000305" key="3"/>